<organism>
    <name type="scientific">Helicobacter pylori (strain J99 / ATCC 700824)</name>
    <name type="common">Campylobacter pylori J99</name>
    <dbReference type="NCBI Taxonomy" id="85963"/>
    <lineage>
        <taxon>Bacteria</taxon>
        <taxon>Pseudomonadati</taxon>
        <taxon>Campylobacterota</taxon>
        <taxon>Epsilonproteobacteria</taxon>
        <taxon>Campylobacterales</taxon>
        <taxon>Helicobacteraceae</taxon>
        <taxon>Helicobacter</taxon>
    </lineage>
</organism>
<reference key="1">
    <citation type="journal article" date="1999" name="Nature">
        <title>Genomic sequence comparison of two unrelated isolates of the human gastric pathogen Helicobacter pylori.</title>
        <authorList>
            <person name="Alm R.A."/>
            <person name="Ling L.-S.L."/>
            <person name="Moir D.T."/>
            <person name="King B.L."/>
            <person name="Brown E.D."/>
            <person name="Doig P.C."/>
            <person name="Smith D.R."/>
            <person name="Noonan B."/>
            <person name="Guild B.C."/>
            <person name="deJonge B.L."/>
            <person name="Carmel G."/>
            <person name="Tummino P.J."/>
            <person name="Caruso A."/>
            <person name="Uria-Nickelsen M."/>
            <person name="Mills D.M."/>
            <person name="Ives C."/>
            <person name="Gibson R."/>
            <person name="Merberg D."/>
            <person name="Mills S.D."/>
            <person name="Jiang Q."/>
            <person name="Taylor D.E."/>
            <person name="Vovis G.F."/>
            <person name="Trust T.J."/>
        </authorList>
    </citation>
    <scope>NUCLEOTIDE SEQUENCE [LARGE SCALE GENOMIC DNA]</scope>
    <source>
        <strain>J99 / ATCC 700824</strain>
    </source>
</reference>
<keyword id="KW-0012">Acyltransferase</keyword>
<keyword id="KW-0441">Lipid A biosynthesis</keyword>
<keyword id="KW-0444">Lipid biosynthesis</keyword>
<keyword id="KW-0443">Lipid metabolism</keyword>
<keyword id="KW-0677">Repeat</keyword>
<keyword id="KW-0808">Transferase</keyword>
<comment type="function">
    <text evidence="1">Catalyzes the N-acylation of UDP-3-O-acylglucosamine using 3-hydroxyacyl-ACP as the acyl donor. Is involved in the biosynthesis of lipid A, a phosphorylated glycolipid that anchors the lipopolysaccharide to the outer membrane of the cell.</text>
</comment>
<comment type="catalytic activity">
    <reaction evidence="1">
        <text>a UDP-3-O-[(3R)-3-hydroxyacyl]-alpha-D-glucosamine + a (3R)-hydroxyacyl-[ACP] = a UDP-2-N,3-O-bis[(3R)-3-hydroxyacyl]-alpha-D-glucosamine + holo-[ACP] + H(+)</text>
        <dbReference type="Rhea" id="RHEA:53836"/>
        <dbReference type="Rhea" id="RHEA-COMP:9685"/>
        <dbReference type="Rhea" id="RHEA-COMP:9945"/>
        <dbReference type="ChEBI" id="CHEBI:15378"/>
        <dbReference type="ChEBI" id="CHEBI:64479"/>
        <dbReference type="ChEBI" id="CHEBI:78827"/>
        <dbReference type="ChEBI" id="CHEBI:137740"/>
        <dbReference type="ChEBI" id="CHEBI:137748"/>
        <dbReference type="EC" id="2.3.1.191"/>
    </reaction>
</comment>
<comment type="pathway">
    <text evidence="1">Bacterial outer membrane biogenesis; LPS lipid A biosynthesis.</text>
</comment>
<comment type="subunit">
    <text evidence="1">Homotrimer.</text>
</comment>
<comment type="similarity">
    <text evidence="1">Belongs to the transferase hexapeptide repeat family. LpxD subfamily.</text>
</comment>
<protein>
    <recommendedName>
        <fullName evidence="1">UDP-3-O-acylglucosamine N-acyltransferase</fullName>
        <ecNumber evidence="1">2.3.1.191</ecNumber>
    </recommendedName>
</protein>
<evidence type="ECO:0000255" key="1">
    <source>
        <dbReference type="HAMAP-Rule" id="MF_00523"/>
    </source>
</evidence>
<name>LPXD_HELPJ</name>
<dbReference type="EC" id="2.3.1.191" evidence="1"/>
<dbReference type="EMBL" id="AE001439">
    <property type="protein sequence ID" value="AAD05766.1"/>
    <property type="molecule type" value="Genomic_DNA"/>
</dbReference>
<dbReference type="PIR" id="C71964">
    <property type="entry name" value="C71964"/>
</dbReference>
<dbReference type="RefSeq" id="WP_000777115.1">
    <property type="nucleotide sequence ID" value="NC_000921.1"/>
</dbReference>
<dbReference type="SMR" id="Q9ZMN6"/>
<dbReference type="KEGG" id="hpj:jhp_0182"/>
<dbReference type="PATRIC" id="fig|85963.30.peg.839"/>
<dbReference type="eggNOG" id="COG1044">
    <property type="taxonomic scope" value="Bacteria"/>
</dbReference>
<dbReference type="UniPathway" id="UPA00973"/>
<dbReference type="Proteomes" id="UP000000804">
    <property type="component" value="Chromosome"/>
</dbReference>
<dbReference type="GO" id="GO:0016020">
    <property type="term" value="C:membrane"/>
    <property type="evidence" value="ECO:0007669"/>
    <property type="project" value="GOC"/>
</dbReference>
<dbReference type="GO" id="GO:0016410">
    <property type="term" value="F:N-acyltransferase activity"/>
    <property type="evidence" value="ECO:0007669"/>
    <property type="project" value="InterPro"/>
</dbReference>
<dbReference type="GO" id="GO:0009245">
    <property type="term" value="P:lipid A biosynthetic process"/>
    <property type="evidence" value="ECO:0007669"/>
    <property type="project" value="UniProtKB-UniRule"/>
</dbReference>
<dbReference type="CDD" id="cd03352">
    <property type="entry name" value="LbH_LpxD"/>
    <property type="match status" value="1"/>
</dbReference>
<dbReference type="Gene3D" id="2.160.10.10">
    <property type="entry name" value="Hexapeptide repeat proteins"/>
    <property type="match status" value="1"/>
</dbReference>
<dbReference type="Gene3D" id="3.40.1390.10">
    <property type="entry name" value="MurE/MurF, N-terminal domain"/>
    <property type="match status" value="1"/>
</dbReference>
<dbReference type="HAMAP" id="MF_00523">
    <property type="entry name" value="LpxD"/>
    <property type="match status" value="1"/>
</dbReference>
<dbReference type="InterPro" id="IPR001451">
    <property type="entry name" value="Hexapep"/>
</dbReference>
<dbReference type="InterPro" id="IPR007691">
    <property type="entry name" value="LpxD"/>
</dbReference>
<dbReference type="InterPro" id="IPR011004">
    <property type="entry name" value="Trimer_LpxA-like_sf"/>
</dbReference>
<dbReference type="InterPro" id="IPR020573">
    <property type="entry name" value="UDP_GlcNAc_AcTrfase_non-rep"/>
</dbReference>
<dbReference type="NCBIfam" id="TIGR01853">
    <property type="entry name" value="lipid_A_lpxD"/>
    <property type="match status" value="1"/>
</dbReference>
<dbReference type="NCBIfam" id="NF002060">
    <property type="entry name" value="PRK00892.1"/>
    <property type="match status" value="1"/>
</dbReference>
<dbReference type="PANTHER" id="PTHR43378">
    <property type="entry name" value="UDP-3-O-ACYLGLUCOSAMINE N-ACYLTRANSFERASE"/>
    <property type="match status" value="1"/>
</dbReference>
<dbReference type="PANTHER" id="PTHR43378:SF2">
    <property type="entry name" value="UDP-3-O-ACYLGLUCOSAMINE N-ACYLTRANSFERASE 1, MITOCHONDRIAL-RELATED"/>
    <property type="match status" value="1"/>
</dbReference>
<dbReference type="Pfam" id="PF00132">
    <property type="entry name" value="Hexapep"/>
    <property type="match status" value="3"/>
</dbReference>
<dbReference type="Pfam" id="PF04613">
    <property type="entry name" value="LpxD"/>
    <property type="match status" value="1"/>
</dbReference>
<dbReference type="SUPFAM" id="SSF51161">
    <property type="entry name" value="Trimeric LpxA-like enzymes"/>
    <property type="match status" value="1"/>
</dbReference>
<accession>Q9ZMN6</accession>
<gene>
    <name evidence="1" type="primary">lpxD</name>
    <name type="ordered locus">jhp_0182</name>
</gene>
<feature type="chain" id="PRO_0000059680" description="UDP-3-O-acylglucosamine N-acyltransferase">
    <location>
        <begin position="1"/>
        <end position="336"/>
    </location>
</feature>
<feature type="active site" description="Proton acceptor" evidence="1">
    <location>
        <position position="233"/>
    </location>
</feature>
<sequence length="336" mass="36563">MKLSELLSAYSIETEFSNDFEVHALAELDKATPNDISYIDQVCYLKLLKDSKAGAVFIRKKESSKVPKSMQALIVDNPHLAFAKVSHAFKIPFFKNPQSVNEPKHFEKVTIMPNVVIGEGVEIGENSLIYPGVVIADGVKIGKNCILYPRVILYQNTILEDNVIIHAGSVIGGDGFGYAHTALGEHVKIEHVGIVRIQKNVEIGANTAIDRAVFGETLIKEGVKIDNLVQIGHNCVLGEHSIVVSQVGLSGSTTTGRNVVFGGQVGIGGHLHVGEFTQIGGKSAVGKDLPPNTNFAGAIPAMEIHEWHHFLAHLRTNFRKQQKTSLLQKAKGFFKS</sequence>
<proteinExistence type="inferred from homology"/>